<reference key="1">
    <citation type="journal article" date="2000" name="Nature">
        <title>The genome sequence of the plant pathogen Xylella fastidiosa.</title>
        <authorList>
            <person name="Simpson A.J.G."/>
            <person name="Reinach F.C."/>
            <person name="Arruda P."/>
            <person name="Abreu F.A."/>
            <person name="Acencio M."/>
            <person name="Alvarenga R."/>
            <person name="Alves L.M.C."/>
            <person name="Araya J.E."/>
            <person name="Baia G.S."/>
            <person name="Baptista C.S."/>
            <person name="Barros M.H."/>
            <person name="Bonaccorsi E.D."/>
            <person name="Bordin S."/>
            <person name="Bove J.M."/>
            <person name="Briones M.R.S."/>
            <person name="Bueno M.R.P."/>
            <person name="Camargo A.A."/>
            <person name="Camargo L.E.A."/>
            <person name="Carraro D.M."/>
            <person name="Carrer H."/>
            <person name="Colauto N.B."/>
            <person name="Colombo C."/>
            <person name="Costa F.F."/>
            <person name="Costa M.C.R."/>
            <person name="Costa-Neto C.M."/>
            <person name="Coutinho L.L."/>
            <person name="Cristofani M."/>
            <person name="Dias-Neto E."/>
            <person name="Docena C."/>
            <person name="El-Dorry H."/>
            <person name="Facincani A.P."/>
            <person name="Ferreira A.J.S."/>
            <person name="Ferreira V.C.A."/>
            <person name="Ferro J.A."/>
            <person name="Fraga J.S."/>
            <person name="Franca S.C."/>
            <person name="Franco M.C."/>
            <person name="Frohme M."/>
            <person name="Furlan L.R."/>
            <person name="Garnier M."/>
            <person name="Goldman G.H."/>
            <person name="Goldman M.H.S."/>
            <person name="Gomes S.L."/>
            <person name="Gruber A."/>
            <person name="Ho P.L."/>
            <person name="Hoheisel J.D."/>
            <person name="Junqueira M.L."/>
            <person name="Kemper E.L."/>
            <person name="Kitajima J.P."/>
            <person name="Krieger J.E."/>
            <person name="Kuramae E.E."/>
            <person name="Laigret F."/>
            <person name="Lambais M.R."/>
            <person name="Leite L.C.C."/>
            <person name="Lemos E.G.M."/>
            <person name="Lemos M.V.F."/>
            <person name="Lopes S.A."/>
            <person name="Lopes C.R."/>
            <person name="Machado J.A."/>
            <person name="Machado M.A."/>
            <person name="Madeira A.M.B.N."/>
            <person name="Madeira H.M.F."/>
            <person name="Marino C.L."/>
            <person name="Marques M.V."/>
            <person name="Martins E.A.L."/>
            <person name="Martins E.M.F."/>
            <person name="Matsukuma A.Y."/>
            <person name="Menck C.F.M."/>
            <person name="Miracca E.C."/>
            <person name="Miyaki C.Y."/>
            <person name="Monteiro-Vitorello C.B."/>
            <person name="Moon D.H."/>
            <person name="Nagai M.A."/>
            <person name="Nascimento A.L.T.O."/>
            <person name="Netto L.E.S."/>
            <person name="Nhani A. Jr."/>
            <person name="Nobrega F.G."/>
            <person name="Nunes L.R."/>
            <person name="Oliveira M.A."/>
            <person name="de Oliveira M.C."/>
            <person name="de Oliveira R.C."/>
            <person name="Palmieri D.A."/>
            <person name="Paris A."/>
            <person name="Peixoto B.R."/>
            <person name="Pereira G.A.G."/>
            <person name="Pereira H.A. Jr."/>
            <person name="Pesquero J.B."/>
            <person name="Quaggio R.B."/>
            <person name="Roberto P.G."/>
            <person name="Rodrigues V."/>
            <person name="de Rosa A.J.M."/>
            <person name="de Rosa V.E. Jr."/>
            <person name="de Sa R.G."/>
            <person name="Santelli R.V."/>
            <person name="Sawasaki H.E."/>
            <person name="da Silva A.C.R."/>
            <person name="da Silva A.M."/>
            <person name="da Silva F.R."/>
            <person name="Silva W.A. Jr."/>
            <person name="da Silveira J.F."/>
            <person name="Silvestri M.L.Z."/>
            <person name="Siqueira W.J."/>
            <person name="de Souza A.A."/>
            <person name="de Souza A.P."/>
            <person name="Terenzi M.F."/>
            <person name="Truffi D."/>
            <person name="Tsai S.M."/>
            <person name="Tsuhako M.H."/>
            <person name="Vallada H."/>
            <person name="Van Sluys M.A."/>
            <person name="Verjovski-Almeida S."/>
            <person name="Vettore A.L."/>
            <person name="Zago M.A."/>
            <person name="Zatz M."/>
            <person name="Meidanis J."/>
            <person name="Setubal J.C."/>
        </authorList>
    </citation>
    <scope>NUCLEOTIDE SEQUENCE [LARGE SCALE GENOMIC DNA]</scope>
    <source>
        <strain>9a5c</strain>
    </source>
</reference>
<protein>
    <recommendedName>
        <fullName evidence="1">Phosphate import ATP-binding protein PstB</fullName>
        <ecNumber evidence="1">7.3.2.1</ecNumber>
    </recommendedName>
    <alternativeName>
        <fullName evidence="1">ABC phosphate transporter</fullName>
    </alternativeName>
    <alternativeName>
        <fullName evidence="1">Phosphate-transporting ATPase</fullName>
    </alternativeName>
</protein>
<organism>
    <name type="scientific">Xylella fastidiosa (strain 9a5c)</name>
    <dbReference type="NCBI Taxonomy" id="160492"/>
    <lineage>
        <taxon>Bacteria</taxon>
        <taxon>Pseudomonadati</taxon>
        <taxon>Pseudomonadota</taxon>
        <taxon>Gammaproteobacteria</taxon>
        <taxon>Lysobacterales</taxon>
        <taxon>Lysobacteraceae</taxon>
        <taxon>Xylella</taxon>
    </lineage>
</organism>
<comment type="function">
    <text evidence="1">Part of the ABC transporter complex PstSACB involved in phosphate import. Responsible for energy coupling to the transport system.</text>
</comment>
<comment type="catalytic activity">
    <reaction evidence="1">
        <text>phosphate(out) + ATP + H2O = ADP + 2 phosphate(in) + H(+)</text>
        <dbReference type="Rhea" id="RHEA:24440"/>
        <dbReference type="ChEBI" id="CHEBI:15377"/>
        <dbReference type="ChEBI" id="CHEBI:15378"/>
        <dbReference type="ChEBI" id="CHEBI:30616"/>
        <dbReference type="ChEBI" id="CHEBI:43474"/>
        <dbReference type="ChEBI" id="CHEBI:456216"/>
        <dbReference type="EC" id="7.3.2.1"/>
    </reaction>
</comment>
<comment type="subunit">
    <text evidence="1">The complex is composed of two ATP-binding proteins (PstB), two transmembrane proteins (PstC and PstA) and a solute-binding protein (PstS).</text>
</comment>
<comment type="subcellular location">
    <subcellularLocation>
        <location evidence="1">Cell inner membrane</location>
        <topology evidence="1">Peripheral membrane protein</topology>
    </subcellularLocation>
</comment>
<comment type="similarity">
    <text evidence="1">Belongs to the ABC transporter superfamily. Phosphate importer (TC 3.A.1.7) family.</text>
</comment>
<name>PSTB_XYLFA</name>
<feature type="chain" id="PRO_0000092935" description="Phosphate import ATP-binding protein PstB">
    <location>
        <begin position="1"/>
        <end position="267"/>
    </location>
</feature>
<feature type="domain" description="ABC transporter" evidence="1">
    <location>
        <begin position="21"/>
        <end position="262"/>
    </location>
</feature>
<feature type="binding site" evidence="1">
    <location>
        <begin position="53"/>
        <end position="60"/>
    </location>
    <ligand>
        <name>ATP</name>
        <dbReference type="ChEBI" id="CHEBI:30616"/>
    </ligand>
</feature>
<gene>
    <name evidence="1" type="primary">pstB</name>
    <name type="ordered locus">XF_2144</name>
</gene>
<dbReference type="EC" id="7.3.2.1" evidence="1"/>
<dbReference type="EMBL" id="AE003849">
    <property type="protein sequence ID" value="AAF84943.1"/>
    <property type="molecule type" value="Genomic_DNA"/>
</dbReference>
<dbReference type="PIR" id="D82593">
    <property type="entry name" value="D82593"/>
</dbReference>
<dbReference type="SMR" id="Q9PBK0"/>
<dbReference type="STRING" id="160492.XF_2144"/>
<dbReference type="KEGG" id="xfa:XF_2144"/>
<dbReference type="eggNOG" id="COG1117">
    <property type="taxonomic scope" value="Bacteria"/>
</dbReference>
<dbReference type="HOGENOM" id="CLU_000604_1_22_6"/>
<dbReference type="Proteomes" id="UP000000812">
    <property type="component" value="Chromosome"/>
</dbReference>
<dbReference type="GO" id="GO:0005886">
    <property type="term" value="C:plasma membrane"/>
    <property type="evidence" value="ECO:0007669"/>
    <property type="project" value="UniProtKB-SubCell"/>
</dbReference>
<dbReference type="GO" id="GO:0005524">
    <property type="term" value="F:ATP binding"/>
    <property type="evidence" value="ECO:0007669"/>
    <property type="project" value="UniProtKB-KW"/>
</dbReference>
<dbReference type="GO" id="GO:0016887">
    <property type="term" value="F:ATP hydrolysis activity"/>
    <property type="evidence" value="ECO:0007669"/>
    <property type="project" value="InterPro"/>
</dbReference>
<dbReference type="GO" id="GO:0015415">
    <property type="term" value="F:ATPase-coupled phosphate ion transmembrane transporter activity"/>
    <property type="evidence" value="ECO:0007669"/>
    <property type="project" value="UniProtKB-EC"/>
</dbReference>
<dbReference type="GO" id="GO:0035435">
    <property type="term" value="P:phosphate ion transmembrane transport"/>
    <property type="evidence" value="ECO:0007669"/>
    <property type="project" value="InterPro"/>
</dbReference>
<dbReference type="CDD" id="cd03260">
    <property type="entry name" value="ABC_PstB_phosphate_transporter"/>
    <property type="match status" value="1"/>
</dbReference>
<dbReference type="FunFam" id="3.40.50.300:FF:000132">
    <property type="entry name" value="Phosphate import ATP-binding protein PstB"/>
    <property type="match status" value="1"/>
</dbReference>
<dbReference type="Gene3D" id="3.40.50.300">
    <property type="entry name" value="P-loop containing nucleotide triphosphate hydrolases"/>
    <property type="match status" value="1"/>
</dbReference>
<dbReference type="InterPro" id="IPR003593">
    <property type="entry name" value="AAA+_ATPase"/>
</dbReference>
<dbReference type="InterPro" id="IPR003439">
    <property type="entry name" value="ABC_transporter-like_ATP-bd"/>
</dbReference>
<dbReference type="InterPro" id="IPR017871">
    <property type="entry name" value="ABC_transporter-like_CS"/>
</dbReference>
<dbReference type="InterPro" id="IPR027417">
    <property type="entry name" value="P-loop_NTPase"/>
</dbReference>
<dbReference type="InterPro" id="IPR005670">
    <property type="entry name" value="PstB-like"/>
</dbReference>
<dbReference type="NCBIfam" id="TIGR00972">
    <property type="entry name" value="3a0107s01c2"/>
    <property type="match status" value="1"/>
</dbReference>
<dbReference type="PANTHER" id="PTHR43423">
    <property type="entry name" value="ABC TRANSPORTER I FAMILY MEMBER 17"/>
    <property type="match status" value="1"/>
</dbReference>
<dbReference type="PANTHER" id="PTHR43423:SF3">
    <property type="entry name" value="PHOSPHATE IMPORT ATP-BINDING PROTEIN PSTB"/>
    <property type="match status" value="1"/>
</dbReference>
<dbReference type="Pfam" id="PF00005">
    <property type="entry name" value="ABC_tran"/>
    <property type="match status" value="1"/>
</dbReference>
<dbReference type="SMART" id="SM00382">
    <property type="entry name" value="AAA"/>
    <property type="match status" value="1"/>
</dbReference>
<dbReference type="SUPFAM" id="SSF52540">
    <property type="entry name" value="P-loop containing nucleoside triphosphate hydrolases"/>
    <property type="match status" value="1"/>
</dbReference>
<dbReference type="PROSITE" id="PS00211">
    <property type="entry name" value="ABC_TRANSPORTER_1"/>
    <property type="match status" value="1"/>
</dbReference>
<dbReference type="PROSITE" id="PS50893">
    <property type="entry name" value="ABC_TRANSPORTER_2"/>
    <property type="match status" value="1"/>
</dbReference>
<dbReference type="PROSITE" id="PS51238">
    <property type="entry name" value="PSTB"/>
    <property type="match status" value="1"/>
</dbReference>
<proteinExistence type="inferred from homology"/>
<evidence type="ECO:0000255" key="1">
    <source>
        <dbReference type="HAMAP-Rule" id="MF_01702"/>
    </source>
</evidence>
<keyword id="KW-0067">ATP-binding</keyword>
<keyword id="KW-0997">Cell inner membrane</keyword>
<keyword id="KW-1003">Cell membrane</keyword>
<keyword id="KW-0472">Membrane</keyword>
<keyword id="KW-0547">Nucleotide-binding</keyword>
<keyword id="KW-0592">Phosphate transport</keyword>
<keyword id="KW-1278">Translocase</keyword>
<keyword id="KW-0813">Transport</keyword>
<accession>Q9PBK0</accession>
<sequence>MQRIAIPASANAPLTTTPVKIAIRNLEFYYGTFQALKQINLEIPEKRVTALIGPSGCGKSTLLRIFNRIYALYPKLEARGEVLLDGENILSPKYSINRLRSKVGMVFQKPVPFPMTIYENVAYGIRHHEVMSKSQMNDRVEQALQQSALWEEVKDKLNQNALGLSGGQQQRLCIARAIALTPSVLLLDEPTSALDPISTSRIEQLIEELKTKYTIVIVTHNMQQAARVSDYTGFMYLGDLIEHDRTETIFSQPSKQQTEDYITGRFG</sequence>